<keyword id="KW-0002">3D-structure</keyword>
<keyword id="KW-0046">Antibiotic resistance</keyword>
<keyword id="KW-0903">Direct protein sequencing</keyword>
<keyword id="KW-0238">DNA-binding</keyword>
<keyword id="KW-0460">Magnesium</keyword>
<keyword id="KW-0479">Metal-binding</keyword>
<keyword id="KW-0614">Plasmid</keyword>
<keyword id="KW-0678">Repressor</keyword>
<keyword id="KW-0804">Transcription</keyword>
<keyword id="KW-0805">Transcription regulation</keyword>
<geneLocation type="plasmid">
    <name>RA1</name>
</geneLocation>
<organism>
    <name type="scientific">Escherichia coli</name>
    <dbReference type="NCBI Taxonomy" id="562"/>
    <lineage>
        <taxon>Bacteria</taxon>
        <taxon>Pseudomonadati</taxon>
        <taxon>Pseudomonadota</taxon>
        <taxon>Gammaproteobacteria</taxon>
        <taxon>Enterobacterales</taxon>
        <taxon>Enterobacteriaceae</taxon>
        <taxon>Escherichia</taxon>
    </lineage>
</organism>
<dbReference type="EMBL" id="X01083">
    <property type="protein sequence ID" value="CAA25561.1"/>
    <property type="molecule type" value="Genomic_DNA"/>
</dbReference>
<dbReference type="PIR" id="S07359">
    <property type="entry name" value="S07359"/>
</dbReference>
<dbReference type="RefSeq" id="YP_002995714.1">
    <property type="nucleotide sequence ID" value="NC_012886.1"/>
</dbReference>
<dbReference type="RefSeq" id="YP_007349483.1">
    <property type="nucleotide sequence ID" value="NC_020086.1"/>
</dbReference>
<dbReference type="PDB" id="1A6I">
    <property type="method" value="X-ray"/>
    <property type="resolution" value="2.40 A"/>
    <property type="chains" value="A=6-218"/>
</dbReference>
<dbReference type="PDB" id="1BJZ">
    <property type="method" value="X-ray"/>
    <property type="resolution" value="2.20 A"/>
    <property type="chains" value="A=3-208"/>
</dbReference>
<dbReference type="PDB" id="1ORK">
    <property type="method" value="X-ray"/>
    <property type="resolution" value="2.40 A"/>
    <property type="chains" value="A=3-208"/>
</dbReference>
<dbReference type="PDB" id="1QPI">
    <property type="method" value="X-ray"/>
    <property type="resolution" value="2.50 A"/>
    <property type="chains" value="A=4-206"/>
</dbReference>
<dbReference type="PDB" id="2FJ1">
    <property type="method" value="X-ray"/>
    <property type="resolution" value="2.20 A"/>
    <property type="chains" value="A=2-208"/>
</dbReference>
<dbReference type="PDB" id="2NS7">
    <property type="method" value="X-ray"/>
    <property type="resolution" value="2.40 A"/>
    <property type="chains" value="A/B/C/D=188-208"/>
</dbReference>
<dbReference type="PDB" id="2NS8">
    <property type="method" value="X-ray"/>
    <property type="resolution" value="2.55 A"/>
    <property type="chains" value="A/B/C/D=188-208"/>
</dbReference>
<dbReference type="PDB" id="2O7O">
    <property type="method" value="X-ray"/>
    <property type="resolution" value="1.89 A"/>
    <property type="chains" value="A=2-208"/>
</dbReference>
<dbReference type="PDB" id="2TCT">
    <property type="method" value="X-ray"/>
    <property type="resolution" value="2.10 A"/>
    <property type="chains" value="A=2-208"/>
</dbReference>
<dbReference type="PDB" id="2TRT">
    <property type="method" value="X-ray"/>
    <property type="resolution" value="2.50 A"/>
    <property type="chains" value="A=2-218"/>
</dbReference>
<dbReference type="PDB" id="2VKE">
    <property type="method" value="X-ray"/>
    <property type="resolution" value="1.62 A"/>
    <property type="chains" value="A=3-208"/>
</dbReference>
<dbReference type="PDB" id="2VKV">
    <property type="method" value="X-ray"/>
    <property type="resolution" value="1.74 A"/>
    <property type="chains" value="A=51-208"/>
</dbReference>
<dbReference type="PDB" id="2X6O">
    <property type="method" value="X-ray"/>
    <property type="resolution" value="2.30 A"/>
    <property type="chains" value="A=3-208"/>
</dbReference>
<dbReference type="PDB" id="2X9D">
    <property type="method" value="X-ray"/>
    <property type="resolution" value="2.51 A"/>
    <property type="chains" value="A=3-208"/>
</dbReference>
<dbReference type="PDB" id="2XB5">
    <property type="method" value="X-ray"/>
    <property type="resolution" value="2.50 A"/>
    <property type="chains" value="A=2-208"/>
</dbReference>
<dbReference type="PDB" id="2XGC">
    <property type="method" value="X-ray"/>
    <property type="resolution" value="2.15 A"/>
    <property type="chains" value="A/B=51-208"/>
</dbReference>
<dbReference type="PDB" id="2XGD">
    <property type="method" value="X-ray"/>
    <property type="resolution" value="2.25 A"/>
    <property type="chains" value="A=51-208"/>
</dbReference>
<dbReference type="PDB" id="2XGE">
    <property type="method" value="X-ray"/>
    <property type="resolution" value="2.14 A"/>
    <property type="chains" value="A/B=51-208"/>
</dbReference>
<dbReference type="PDB" id="2XPU">
    <property type="method" value="X-ray"/>
    <property type="resolution" value="1.55 A"/>
    <property type="chains" value="A=3-208"/>
</dbReference>
<dbReference type="PDB" id="2XPV">
    <property type="method" value="X-ray"/>
    <property type="resolution" value="1.49 A"/>
    <property type="chains" value="A=3-208"/>
</dbReference>
<dbReference type="PDB" id="2XPW">
    <property type="method" value="X-ray"/>
    <property type="resolution" value="1.44 A"/>
    <property type="chains" value="A=3-208"/>
</dbReference>
<dbReference type="PDB" id="2XRL">
    <property type="method" value="X-ray"/>
    <property type="resolution" value="1.85 A"/>
    <property type="chains" value="A=3-208"/>
</dbReference>
<dbReference type="PDB" id="3FK6">
    <property type="method" value="X-ray"/>
    <property type="resolution" value="2.10 A"/>
    <property type="chains" value="A/B=51-208"/>
</dbReference>
<dbReference type="PDB" id="3FK7">
    <property type="method" value="X-ray"/>
    <property type="resolution" value="2.06 A"/>
    <property type="chains" value="A/B=51-208"/>
</dbReference>
<dbReference type="PDB" id="3ZQF">
    <property type="method" value="X-ray"/>
    <property type="resolution" value="2.56 A"/>
    <property type="chains" value="A=188-208"/>
</dbReference>
<dbReference type="PDB" id="3ZQG">
    <property type="method" value="X-ray"/>
    <property type="resolution" value="2.45 A"/>
    <property type="chains" value="A=188-208"/>
</dbReference>
<dbReference type="PDB" id="3ZQH">
    <property type="method" value="X-ray"/>
    <property type="resolution" value="1.60 A"/>
    <property type="chains" value="A=188-208"/>
</dbReference>
<dbReference type="PDB" id="3ZQI">
    <property type="method" value="X-ray"/>
    <property type="resolution" value="1.50 A"/>
    <property type="chains" value="A/B=188-208"/>
</dbReference>
<dbReference type="PDB" id="4ABZ">
    <property type="method" value="X-ray"/>
    <property type="resolution" value="1.89 A"/>
    <property type="chains" value="A=3-208"/>
</dbReference>
<dbReference type="PDB" id="4AUX">
    <property type="method" value="X-ray"/>
    <property type="resolution" value="2.25 A"/>
    <property type="chains" value="A=2-208"/>
</dbReference>
<dbReference type="PDB" id="4B1R">
    <property type="method" value="X-ray"/>
    <property type="resolution" value="1.95 A"/>
    <property type="chains" value="A=3-208"/>
</dbReference>
<dbReference type="PDB" id="4B3A">
    <property type="method" value="X-ray"/>
    <property type="resolution" value="1.70 A"/>
    <property type="chains" value="A=3-208"/>
</dbReference>
<dbReference type="PDB" id="4D7M">
    <property type="method" value="X-ray"/>
    <property type="resolution" value="1.75 A"/>
    <property type="chains" value="A=3-208"/>
</dbReference>
<dbReference type="PDB" id="4D7N">
    <property type="method" value="X-ray"/>
    <property type="resolution" value="1.89 A"/>
    <property type="chains" value="A=3-208"/>
</dbReference>
<dbReference type="PDB" id="4V2F">
    <property type="method" value="X-ray"/>
    <property type="resolution" value="2.40 A"/>
    <property type="chains" value="A=3-208"/>
</dbReference>
<dbReference type="PDB" id="4V2G">
    <property type="method" value="X-ray"/>
    <property type="resolution" value="2.70 A"/>
    <property type="chains" value="A/B=3-208"/>
</dbReference>
<dbReference type="PDB" id="5FKK">
    <property type="method" value="X-ray"/>
    <property type="resolution" value="1.75 A"/>
    <property type="chains" value="A/B=3-208"/>
</dbReference>
<dbReference type="PDB" id="5FKL">
    <property type="method" value="X-ray"/>
    <property type="resolution" value="1.90 A"/>
    <property type="chains" value="A=3-208"/>
</dbReference>
<dbReference type="PDB" id="5FKM">
    <property type="method" value="X-ray"/>
    <property type="resolution" value="1.63 A"/>
    <property type="chains" value="A=3-208"/>
</dbReference>
<dbReference type="PDB" id="5FKN">
    <property type="method" value="X-ray"/>
    <property type="resolution" value="1.80 A"/>
    <property type="chains" value="A/B=3-208"/>
</dbReference>
<dbReference type="PDB" id="5FKO">
    <property type="method" value="X-ray"/>
    <property type="resolution" value="1.85 A"/>
    <property type="chains" value="A=3-208"/>
</dbReference>
<dbReference type="PDB" id="6FPL">
    <property type="method" value="X-ray"/>
    <property type="resolution" value="1.60 A"/>
    <property type="chains" value="A=2-208"/>
</dbReference>
<dbReference type="PDB" id="6FPM">
    <property type="method" value="X-ray"/>
    <property type="resolution" value="1.85 A"/>
    <property type="chains" value="A=2-208"/>
</dbReference>
<dbReference type="PDB" id="6FTS">
    <property type="method" value="X-ray"/>
    <property type="resolution" value="2.00 A"/>
    <property type="chains" value="A=3-208"/>
</dbReference>
<dbReference type="PDB" id="6QJW">
    <property type="method" value="X-ray"/>
    <property type="resolution" value="2.10 A"/>
    <property type="chains" value="A=2-208"/>
</dbReference>
<dbReference type="PDB" id="6QJX">
    <property type="method" value="X-ray"/>
    <property type="resolution" value="2.10 A"/>
    <property type="chains" value="A=2-208"/>
</dbReference>
<dbReference type="PDB" id="6RBL">
    <property type="method" value="X-ray"/>
    <property type="resolution" value="1.90 A"/>
    <property type="chains" value="A=2-208"/>
</dbReference>
<dbReference type="PDB" id="6RBM">
    <property type="method" value="X-ray"/>
    <property type="resolution" value="2.05 A"/>
    <property type="chains" value="A=2-208"/>
</dbReference>
<dbReference type="PDB" id="6RCR">
    <property type="method" value="X-ray"/>
    <property type="resolution" value="2.05 A"/>
    <property type="chains" value="A=2-208"/>
</dbReference>
<dbReference type="PDB" id="6RGX">
    <property type="method" value="X-ray"/>
    <property type="resolution" value="1.80 A"/>
    <property type="chains" value="A/B=3-208"/>
</dbReference>
<dbReference type="PDB" id="6YR1">
    <property type="method" value="X-ray"/>
    <property type="resolution" value="2.30 A"/>
    <property type="chains" value="AAA=3-208"/>
</dbReference>
<dbReference type="PDB" id="6YR2">
    <property type="method" value="X-ray"/>
    <property type="resolution" value="1.95 A"/>
    <property type="chains" value="AAA/BBB=2-208"/>
</dbReference>
<dbReference type="PDBsum" id="1A6I"/>
<dbReference type="PDBsum" id="1BJZ"/>
<dbReference type="PDBsum" id="1ORK"/>
<dbReference type="PDBsum" id="1QPI"/>
<dbReference type="PDBsum" id="2FJ1"/>
<dbReference type="PDBsum" id="2NS7"/>
<dbReference type="PDBsum" id="2NS8"/>
<dbReference type="PDBsum" id="2O7O"/>
<dbReference type="PDBsum" id="2TCT"/>
<dbReference type="PDBsum" id="2TRT"/>
<dbReference type="PDBsum" id="2VKE"/>
<dbReference type="PDBsum" id="2VKV"/>
<dbReference type="PDBsum" id="2X6O"/>
<dbReference type="PDBsum" id="2X9D"/>
<dbReference type="PDBsum" id="2XB5"/>
<dbReference type="PDBsum" id="2XGC"/>
<dbReference type="PDBsum" id="2XGD"/>
<dbReference type="PDBsum" id="2XGE"/>
<dbReference type="PDBsum" id="2XPU"/>
<dbReference type="PDBsum" id="2XPV"/>
<dbReference type="PDBsum" id="2XPW"/>
<dbReference type="PDBsum" id="2XRL"/>
<dbReference type="PDBsum" id="3FK6"/>
<dbReference type="PDBsum" id="3FK7"/>
<dbReference type="PDBsum" id="3ZQF"/>
<dbReference type="PDBsum" id="3ZQG"/>
<dbReference type="PDBsum" id="3ZQH"/>
<dbReference type="PDBsum" id="3ZQI"/>
<dbReference type="PDBsum" id="4ABZ"/>
<dbReference type="PDBsum" id="4AUX"/>
<dbReference type="PDBsum" id="4B1R"/>
<dbReference type="PDBsum" id="4B3A"/>
<dbReference type="PDBsum" id="4D7M"/>
<dbReference type="PDBsum" id="4D7N"/>
<dbReference type="PDBsum" id="4V2F"/>
<dbReference type="PDBsum" id="4V2G"/>
<dbReference type="PDBsum" id="5FKK"/>
<dbReference type="PDBsum" id="5FKL"/>
<dbReference type="PDBsum" id="5FKM"/>
<dbReference type="PDBsum" id="5FKN"/>
<dbReference type="PDBsum" id="5FKO"/>
<dbReference type="PDBsum" id="6FPL"/>
<dbReference type="PDBsum" id="6FPM"/>
<dbReference type="PDBsum" id="6FTS"/>
<dbReference type="PDBsum" id="6QJW"/>
<dbReference type="PDBsum" id="6QJX"/>
<dbReference type="PDBsum" id="6RBL"/>
<dbReference type="PDBsum" id="6RBM"/>
<dbReference type="PDBsum" id="6RCR"/>
<dbReference type="PDBsum" id="6RGX"/>
<dbReference type="PDBsum" id="6YR1"/>
<dbReference type="PDBsum" id="6YR2"/>
<dbReference type="SASBDB" id="P0ACT4"/>
<dbReference type="SMR" id="P0ACT4"/>
<dbReference type="EvolutionaryTrace" id="P0ACT4"/>
<dbReference type="GO" id="GO:0003700">
    <property type="term" value="F:DNA-binding transcription factor activity"/>
    <property type="evidence" value="ECO:0007669"/>
    <property type="project" value="TreeGrafter"/>
</dbReference>
<dbReference type="GO" id="GO:0046872">
    <property type="term" value="F:metal ion binding"/>
    <property type="evidence" value="ECO:0007669"/>
    <property type="project" value="UniProtKB-KW"/>
</dbReference>
<dbReference type="GO" id="GO:0000976">
    <property type="term" value="F:transcription cis-regulatory region binding"/>
    <property type="evidence" value="ECO:0007669"/>
    <property type="project" value="TreeGrafter"/>
</dbReference>
<dbReference type="GO" id="GO:0045892">
    <property type="term" value="P:negative regulation of DNA-templated transcription"/>
    <property type="evidence" value="ECO:0007669"/>
    <property type="project" value="InterPro"/>
</dbReference>
<dbReference type="GO" id="GO:0046677">
    <property type="term" value="P:response to antibiotic"/>
    <property type="evidence" value="ECO:0007669"/>
    <property type="project" value="UniProtKB-KW"/>
</dbReference>
<dbReference type="Gene3D" id="1.10.10.60">
    <property type="entry name" value="Homeodomain-like"/>
    <property type="match status" value="1"/>
</dbReference>
<dbReference type="Gene3D" id="1.10.357.10">
    <property type="entry name" value="Tetracycline Repressor, domain 2"/>
    <property type="match status" value="1"/>
</dbReference>
<dbReference type="InterPro" id="IPR023772">
    <property type="entry name" value="DNA-bd_HTH_TetR-type_CS"/>
</dbReference>
<dbReference type="InterPro" id="IPR009057">
    <property type="entry name" value="Homeodomain-like_sf"/>
</dbReference>
<dbReference type="InterPro" id="IPR050109">
    <property type="entry name" value="HTH-type_TetR-like_transc_reg"/>
</dbReference>
<dbReference type="InterPro" id="IPR001647">
    <property type="entry name" value="HTH_TetR"/>
</dbReference>
<dbReference type="InterPro" id="IPR004111">
    <property type="entry name" value="Repressor_TetR_C"/>
</dbReference>
<dbReference type="InterPro" id="IPR003012">
    <property type="entry name" value="Tet_transcr_reg_TetR"/>
</dbReference>
<dbReference type="InterPro" id="IPR036271">
    <property type="entry name" value="Tet_transcr_reg_TetR-rel_C_sf"/>
</dbReference>
<dbReference type="NCBIfam" id="NF010319">
    <property type="entry name" value="PRK13756.1"/>
    <property type="match status" value="1"/>
</dbReference>
<dbReference type="PANTHER" id="PTHR30055">
    <property type="entry name" value="HTH-TYPE TRANSCRIPTIONAL REGULATOR RUTR"/>
    <property type="match status" value="1"/>
</dbReference>
<dbReference type="PANTHER" id="PTHR30055:SF151">
    <property type="entry name" value="TRANSCRIPTIONAL REGULATORY PROTEIN"/>
    <property type="match status" value="1"/>
</dbReference>
<dbReference type="Pfam" id="PF02909">
    <property type="entry name" value="TetR_C_1"/>
    <property type="match status" value="1"/>
</dbReference>
<dbReference type="Pfam" id="PF00440">
    <property type="entry name" value="TetR_N"/>
    <property type="match status" value="1"/>
</dbReference>
<dbReference type="PRINTS" id="PR00455">
    <property type="entry name" value="HTHTETR"/>
</dbReference>
<dbReference type="PRINTS" id="PR00400">
    <property type="entry name" value="TETREPRESSOR"/>
</dbReference>
<dbReference type="SUPFAM" id="SSF46689">
    <property type="entry name" value="Homeodomain-like"/>
    <property type="match status" value="1"/>
</dbReference>
<dbReference type="SUPFAM" id="SSF48498">
    <property type="entry name" value="Tetracyclin repressor-like, C-terminal domain"/>
    <property type="match status" value="1"/>
</dbReference>
<dbReference type="PROSITE" id="PS01081">
    <property type="entry name" value="HTH_TETR_1"/>
    <property type="match status" value="1"/>
</dbReference>
<dbReference type="PROSITE" id="PS50977">
    <property type="entry name" value="HTH_TETR_2"/>
    <property type="match status" value="1"/>
</dbReference>
<feature type="initiator methionine" description="Removed">
    <location>
        <position position="1"/>
    </location>
</feature>
<feature type="chain" id="PRO_0000070615" description="Tetracycline repressor protein class D">
    <location>
        <begin position="2"/>
        <end position="218"/>
    </location>
</feature>
<feature type="domain" description="HTH tetR-type" evidence="1">
    <location>
        <begin position="3"/>
        <end position="63"/>
    </location>
</feature>
<feature type="DNA-binding region" description="H-T-H motif" evidence="1">
    <location>
        <begin position="26"/>
        <end position="45"/>
    </location>
</feature>
<feature type="binding site" evidence="2 3">
    <location>
        <position position="64"/>
    </location>
    <ligand>
        <name>tetracycline</name>
        <dbReference type="ChEBI" id="CHEBI:77932"/>
    </ligand>
</feature>
<feature type="binding site" evidence="2 3">
    <location>
        <position position="82"/>
    </location>
    <ligand>
        <name>tetracycline</name>
        <dbReference type="ChEBI" id="CHEBI:77932"/>
    </ligand>
</feature>
<feature type="binding site" evidence="2 3">
    <location>
        <position position="100"/>
    </location>
    <ligand>
        <name>Mg(2+)</name>
        <dbReference type="ChEBI" id="CHEBI:18420"/>
    </ligand>
</feature>
<feature type="helix" evidence="7">
    <location>
        <begin position="6"/>
        <end position="24"/>
    </location>
</feature>
<feature type="helix" evidence="7">
    <location>
        <begin position="27"/>
        <end position="34"/>
    </location>
</feature>
<feature type="helix" evidence="7">
    <location>
        <begin position="38"/>
        <end position="44"/>
    </location>
</feature>
<feature type="helix" evidence="7">
    <location>
        <begin position="48"/>
        <end position="63"/>
    </location>
</feature>
<feature type="strand" evidence="5">
    <location>
        <begin position="64"/>
        <end position="68"/>
    </location>
</feature>
<feature type="strand" evidence="5">
    <location>
        <begin position="70"/>
        <end position="74"/>
    </location>
</feature>
<feature type="helix" evidence="7">
    <location>
        <begin position="75"/>
        <end position="91"/>
    </location>
</feature>
<feature type="helix" evidence="7">
    <location>
        <begin position="96"/>
        <end position="100"/>
    </location>
</feature>
<feature type="strand" evidence="5">
    <location>
        <begin position="102"/>
        <end position="104"/>
    </location>
</feature>
<feature type="helix" evidence="7">
    <location>
        <begin position="107"/>
        <end position="109"/>
    </location>
</feature>
<feature type="helix" evidence="7">
    <location>
        <begin position="110"/>
        <end position="122"/>
    </location>
</feature>
<feature type="helix" evidence="7">
    <location>
        <begin position="127"/>
        <end position="156"/>
    </location>
</feature>
<feature type="strand" evidence="7">
    <location>
        <begin position="163"/>
        <end position="165"/>
    </location>
</feature>
<feature type="helix" evidence="7">
    <location>
        <begin position="168"/>
        <end position="178"/>
    </location>
</feature>
<feature type="strand" evidence="6">
    <location>
        <begin position="180"/>
        <end position="182"/>
    </location>
</feature>
<feature type="helix" evidence="7">
    <location>
        <begin position="183"/>
        <end position="203"/>
    </location>
</feature>
<feature type="strand" evidence="4">
    <location>
        <begin position="204"/>
        <end position="208"/>
    </location>
</feature>
<evidence type="ECO:0000255" key="1">
    <source>
        <dbReference type="PROSITE-ProRule" id="PRU00335"/>
    </source>
</evidence>
<evidence type="ECO:0000269" key="2">
    <source>
    </source>
</evidence>
<evidence type="ECO:0007744" key="3">
    <source>
        <dbReference type="PDB" id="2TRT"/>
    </source>
</evidence>
<evidence type="ECO:0007829" key="4">
    <source>
        <dbReference type="PDB" id="2XGC"/>
    </source>
</evidence>
<evidence type="ECO:0007829" key="5">
    <source>
        <dbReference type="PDB" id="2XGE"/>
    </source>
</evidence>
<evidence type="ECO:0007829" key="6">
    <source>
        <dbReference type="PDB" id="2XPV"/>
    </source>
</evidence>
<evidence type="ECO:0007829" key="7">
    <source>
        <dbReference type="PDB" id="2XPW"/>
    </source>
</evidence>
<accession>P0ACT4</accession>
<accession>P09164</accession>
<sequence length="218" mass="24419">MARLNRESVIDAALELLNETGIDGLTTRKLAQKLGIEQPTLYWHVKNKRALLDALAVEILARHHDYSLPAAGESWQSFLRNNAMSFRRALLRYRDGAKVHLGTRPDEKQYDTVETQLRFMTENGFSLRDGLYAISAVSHFTLGAVLEQQEHTAALTDRPAAPDENLPPLLREALQIMDSDDGEQAFLHGLESLIRGFEVQLTALLQIVGGDKLIIPFC</sequence>
<name>TETR4_ECOLX</name>
<proteinExistence type="evidence at protein level"/>
<gene>
    <name type="primary">tetR</name>
</gene>
<comment type="function">
    <text>TetR is the repressor of the tetracycline resistance element; its N-terminal region forms a helix-turn-helix structure and binds DNA. Binding of tetracycline to TetR reduces the repressor affinity for the tetracycline resistance gene (tetA) promoter operator sites.</text>
</comment>
<comment type="subunit">
    <text>Homodimer.</text>
</comment>
<comment type="induction">
    <text>By the [Mg-tetracycline]+ complex.</text>
</comment>
<reference key="1">
    <citation type="journal article" date="1984" name="Nucleic Acids Res.">
        <title>Nucleotide sequence of the repressor gene of the RA1 tetracycline resistance determinant: structural and functional comparison with three related Tet repressor genes.</title>
        <authorList>
            <person name="Unger B."/>
            <person name="Klock G."/>
            <person name="Hillen W."/>
        </authorList>
    </citation>
    <scope>NUCLEOTIDE SEQUENCE [GENOMIC DNA]</scope>
    <source>
        <strain>J53-1</strain>
    </source>
</reference>
<reference evidence="3" key="2">
    <citation type="journal article" date="1994" name="Science">
        <title>Structure of the Tet repressor-tetracycline complex and regulation of antibiotic resistance.</title>
        <authorList>
            <person name="Hinrichs W."/>
            <person name="Kisker C."/>
            <person name="Duevel C."/>
            <person name="Mueller A."/>
            <person name="Tovar K."/>
            <person name="Hillen W."/>
            <person name="Saenger W."/>
        </authorList>
    </citation>
    <scope>X-RAY CRYSTALLOGRAPHY (2.5 ANGSTROMS) IN COMPLEX WITH MAGNESIUM AND TETRACYCLINE</scope>
    <scope>PARTIAL PROTEIN SEQUENCE</scope>
</reference>
<reference key="3">
    <citation type="journal article" date="1998" name="J. Mol. Biol.">
        <title>Conformational changes of the Tet repressor induced by tetracycline trapping.</title>
        <authorList>
            <person name="Orth P."/>
            <person name="Cordes F."/>
            <person name="Schnappinger D."/>
            <person name="Hillen W."/>
            <person name="Saenger W."/>
            <person name="Hinrichs W."/>
        </authorList>
    </citation>
    <scope>X-RAY CRYSTALLOGRAPHY (2.4 ANGSTROMS)</scope>
</reference>
<reference key="4">
    <citation type="journal article" date="1999" name="Biochemistry">
        <title>Tetracycline-chelated Mg2+ ion initiates helix unwinding in Tet repressor induction.</title>
        <authorList>
            <person name="Orth P."/>
            <person name="Saenger W."/>
            <person name="Hinrichs W."/>
        </authorList>
    </citation>
    <scope>X-RAY CRYSTALLOGRAPHY (2.4 ANGSTROMS)</scope>
</reference>
<reference key="5">
    <citation type="journal article" date="1999" name="J. Mol. Biol.">
        <title>Crystal structure of the tet repressor in complex with a novel tetracycline, 9-(N,N-dimethylglycylamido)-6-demethyl-6-deoxy-tetracycline.</title>
        <authorList>
            <person name="Orth P."/>
            <person name="Schnappinger D."/>
            <person name="Sum P.-E."/>
            <person name="Ellestad G.A."/>
            <person name="Hillen W."/>
            <person name="Saenger W."/>
            <person name="Hinrichs W."/>
        </authorList>
    </citation>
    <scope>X-RAY CRYSTALLOGRAPHY (2.4 ANGSTROMS)</scope>
</reference>
<reference key="6">
    <citation type="journal article" date="2000" name="Nat. Struct. Biol.">
        <title>Structural basis of gene regulation by the tetracycline inducible Tet repressor-operator system.</title>
        <authorList>
            <person name="Orth P."/>
            <person name="Schnappinger D."/>
            <person name="Hillen W."/>
            <person name="Saenger W."/>
            <person name="Hinrichs W."/>
        </authorList>
    </citation>
    <scope>X-RAY CRYSTALLOGRAPHY (2.51 ANGSTROMS) OF 1-208</scope>
</reference>
<protein>
    <recommendedName>
        <fullName>Tetracycline repressor protein class D</fullName>
    </recommendedName>
</protein>